<dbReference type="EMBL" id="AE005672">
    <property type="protein sequence ID" value="AAK74511.1"/>
    <property type="molecule type" value="Genomic_DNA"/>
</dbReference>
<dbReference type="PIR" id="F95039">
    <property type="entry name" value="F95039"/>
</dbReference>
<dbReference type="PIR" id="H97909">
    <property type="entry name" value="H97909"/>
</dbReference>
<dbReference type="PIR" id="S06726">
    <property type="entry name" value="S06726"/>
</dbReference>
<dbReference type="RefSeq" id="WP_000872275.1">
    <property type="nucleotide sequence ID" value="NC_003028.3"/>
</dbReference>
<dbReference type="PDB" id="1PMD">
    <property type="method" value="X-ray"/>
    <property type="resolution" value="3.50 A"/>
    <property type="chains" value="A=76-750"/>
</dbReference>
<dbReference type="PDB" id="1QME">
    <property type="method" value="X-ray"/>
    <property type="resolution" value="2.40 A"/>
    <property type="chains" value="A=49-750"/>
</dbReference>
<dbReference type="PDB" id="1QMF">
    <property type="method" value="X-ray"/>
    <property type="resolution" value="2.80 A"/>
    <property type="chains" value="A=49-750"/>
</dbReference>
<dbReference type="PDB" id="1RP5">
    <property type="method" value="X-ray"/>
    <property type="resolution" value="3.00 A"/>
    <property type="chains" value="A/B=49-750"/>
</dbReference>
<dbReference type="PDB" id="2Z2L">
    <property type="method" value="X-ray"/>
    <property type="resolution" value="2.85 A"/>
    <property type="chains" value="A/D=71-238, B/E=241-625, C/F=626-750"/>
</dbReference>
<dbReference type="PDB" id="2Z2M">
    <property type="method" value="X-ray"/>
    <property type="resolution" value="2.60 A"/>
    <property type="chains" value="A/D=71-238, B/E=241-625, C/F=626-750"/>
</dbReference>
<dbReference type="PDB" id="2ZC3">
    <property type="method" value="X-ray"/>
    <property type="resolution" value="2.50 A"/>
    <property type="chains" value="A/D=71-238, B/E=241-625, C/F=626-750"/>
</dbReference>
<dbReference type="PDB" id="2ZC4">
    <property type="method" value="X-ray"/>
    <property type="resolution" value="2.80 A"/>
    <property type="chains" value="A/D=71-238, B/E=241-625, C/F=626-750"/>
</dbReference>
<dbReference type="PDBsum" id="1PMD"/>
<dbReference type="PDBsum" id="1QME"/>
<dbReference type="PDBsum" id="1QMF"/>
<dbReference type="PDBsum" id="1RP5"/>
<dbReference type="PDBsum" id="2Z2L"/>
<dbReference type="PDBsum" id="2Z2M"/>
<dbReference type="PDBsum" id="2ZC3"/>
<dbReference type="PDBsum" id="2ZC4"/>
<dbReference type="SMR" id="P14677"/>
<dbReference type="BindingDB" id="P14677"/>
<dbReference type="ChEMBL" id="CHEMBL6188"/>
<dbReference type="DrugBank" id="DB01150">
    <property type="generic name" value="Cefprozil"/>
</dbReference>
<dbReference type="DrugBank" id="DB04918">
    <property type="generic name" value="Ceftobiprole"/>
</dbReference>
<dbReference type="PaxDb" id="170187-SP_0336"/>
<dbReference type="EnsemblBacteria" id="AAK74511">
    <property type="protein sequence ID" value="AAK74511"/>
    <property type="gene ID" value="SP_0336"/>
</dbReference>
<dbReference type="KEGG" id="spn:SP_0336"/>
<dbReference type="eggNOG" id="COG0768">
    <property type="taxonomic scope" value="Bacteria"/>
</dbReference>
<dbReference type="PhylomeDB" id="P14677"/>
<dbReference type="BioCyc" id="SPNE170187:G1FZB-345-MONOMER"/>
<dbReference type="BRENDA" id="2.4.1.129">
    <property type="organism ID" value="1960"/>
</dbReference>
<dbReference type="EvolutionaryTrace" id="P14677"/>
<dbReference type="PRO" id="PR:P14677"/>
<dbReference type="Proteomes" id="UP000000585">
    <property type="component" value="Chromosome"/>
</dbReference>
<dbReference type="GO" id="GO:0005886">
    <property type="term" value="C:plasma membrane"/>
    <property type="evidence" value="ECO:0007669"/>
    <property type="project" value="UniProtKB-SubCell"/>
</dbReference>
<dbReference type="GO" id="GO:0008658">
    <property type="term" value="F:penicillin binding"/>
    <property type="evidence" value="ECO:0007669"/>
    <property type="project" value="InterPro"/>
</dbReference>
<dbReference type="GO" id="GO:0051301">
    <property type="term" value="P:cell division"/>
    <property type="evidence" value="ECO:0007669"/>
    <property type="project" value="UniProtKB-KW"/>
</dbReference>
<dbReference type="GO" id="GO:0071555">
    <property type="term" value="P:cell wall organization"/>
    <property type="evidence" value="ECO:0007669"/>
    <property type="project" value="UniProtKB-KW"/>
</dbReference>
<dbReference type="GO" id="GO:0009252">
    <property type="term" value="P:peptidoglycan biosynthetic process"/>
    <property type="evidence" value="ECO:0007669"/>
    <property type="project" value="UniProtKB-KW"/>
</dbReference>
<dbReference type="GO" id="GO:0008360">
    <property type="term" value="P:regulation of cell shape"/>
    <property type="evidence" value="ECO:0007669"/>
    <property type="project" value="UniProtKB-KW"/>
</dbReference>
<dbReference type="GO" id="GO:0046677">
    <property type="term" value="P:response to antibiotic"/>
    <property type="evidence" value="ECO:0007669"/>
    <property type="project" value="UniProtKB-KW"/>
</dbReference>
<dbReference type="CDD" id="cd06573">
    <property type="entry name" value="PASTA"/>
    <property type="match status" value="2"/>
</dbReference>
<dbReference type="FunFam" id="3.40.710.10:FF:000095">
    <property type="entry name" value="Penicillin-binding protein 2x"/>
    <property type="match status" value="1"/>
</dbReference>
<dbReference type="Gene3D" id="2.20.70.70">
    <property type="match status" value="2"/>
</dbReference>
<dbReference type="Gene3D" id="3.30.70.2110">
    <property type="match status" value="1"/>
</dbReference>
<dbReference type="Gene3D" id="3.40.710.10">
    <property type="entry name" value="DD-peptidase/beta-lactamase superfamily"/>
    <property type="match status" value="1"/>
</dbReference>
<dbReference type="Gene3D" id="3.90.1310.10">
    <property type="entry name" value="Penicillin-binding protein 2a (Domain 2)"/>
    <property type="match status" value="1"/>
</dbReference>
<dbReference type="InterPro" id="IPR050515">
    <property type="entry name" value="Bact_Transpept/Beta-Lactamase"/>
</dbReference>
<dbReference type="InterPro" id="IPR053467">
    <property type="entry name" value="Bacterial_Transpeptidase"/>
</dbReference>
<dbReference type="InterPro" id="IPR012338">
    <property type="entry name" value="Beta-lactam/transpept-like"/>
</dbReference>
<dbReference type="InterPro" id="IPR005543">
    <property type="entry name" value="PASTA_dom"/>
</dbReference>
<dbReference type="InterPro" id="IPR005311">
    <property type="entry name" value="PBP_dimer"/>
</dbReference>
<dbReference type="InterPro" id="IPR036138">
    <property type="entry name" value="PBP_dimer_sf"/>
</dbReference>
<dbReference type="InterPro" id="IPR001460">
    <property type="entry name" value="PCN-bd_Tpept"/>
</dbReference>
<dbReference type="NCBIfam" id="NF038271">
    <property type="entry name" value="strep_PBP2X"/>
    <property type="match status" value="1"/>
</dbReference>
<dbReference type="PANTHER" id="PTHR30627:SF26">
    <property type="entry name" value="PENICILLIN-BINDING PROTEIN 2B"/>
    <property type="match status" value="1"/>
</dbReference>
<dbReference type="PANTHER" id="PTHR30627">
    <property type="entry name" value="PEPTIDOGLYCAN D,D-TRANSPEPTIDASE"/>
    <property type="match status" value="1"/>
</dbReference>
<dbReference type="Pfam" id="PF03793">
    <property type="entry name" value="PASTA"/>
    <property type="match status" value="2"/>
</dbReference>
<dbReference type="Pfam" id="PF03717">
    <property type="entry name" value="PBP_dimer"/>
    <property type="match status" value="1"/>
</dbReference>
<dbReference type="Pfam" id="PF00905">
    <property type="entry name" value="Transpeptidase"/>
    <property type="match status" value="1"/>
</dbReference>
<dbReference type="SMART" id="SM00740">
    <property type="entry name" value="PASTA"/>
    <property type="match status" value="1"/>
</dbReference>
<dbReference type="SUPFAM" id="SSF56601">
    <property type="entry name" value="beta-lactamase/transpeptidase-like"/>
    <property type="match status" value="1"/>
</dbReference>
<dbReference type="SUPFAM" id="SSF56519">
    <property type="entry name" value="Penicillin binding protein dimerisation domain"/>
    <property type="match status" value="1"/>
</dbReference>
<dbReference type="SUPFAM" id="SSF54184">
    <property type="entry name" value="Penicillin-binding protein 2x (pbp-2x), c-terminal domain"/>
    <property type="match status" value="2"/>
</dbReference>
<dbReference type="PROSITE" id="PS51178">
    <property type="entry name" value="PASTA"/>
    <property type="match status" value="2"/>
</dbReference>
<comment type="function">
    <text evidence="2">A transpeptidase that forms peptide cross-links between adjacent glycan strands in cell wall peptidoglycan (PG). Part of the divisome machinery that synthesizes the septal cross wall. Beta-lactams inactivate the PBPs by acylating an essential serine residue in the active site of these proteins.</text>
</comment>
<comment type="subcellular location">
    <subcellularLocation>
        <location>Cell membrane</location>
        <topology>Single-pass membrane protein</topology>
    </subcellularLocation>
</comment>
<comment type="miscellaneous">
    <text>The mature form of PBP2x contains an unprocessed signal sequence followed by a membrane-anchoring segment.</text>
</comment>
<comment type="similarity">
    <text evidence="5">Belongs to the transpeptidase family.</text>
</comment>
<organism>
    <name type="scientific">Streptococcus pneumoniae serotype 4 (strain ATCC BAA-334 / TIGR4)</name>
    <dbReference type="NCBI Taxonomy" id="170187"/>
    <lineage>
        <taxon>Bacteria</taxon>
        <taxon>Bacillati</taxon>
        <taxon>Bacillota</taxon>
        <taxon>Bacilli</taxon>
        <taxon>Lactobacillales</taxon>
        <taxon>Streptococcaceae</taxon>
        <taxon>Streptococcus</taxon>
    </lineage>
</organism>
<sequence>MKWTKRVIRYATKNRKSPAENRRRVGKSLSLLSVFVFAIFLVNFAVIIGTGTRFGTDLAKEAKKVHQTTRTVPAKRGTIYDRNGVPIAEDATSYNVYAVIDENYKSATGKILYVEKTQFNKVAEVFHKYLDMEESYVREQLSQPNLKQVSFGAKGNGITYANMMSIKKELEAAEVKGIDFTTSPNRSYPNGQFASSFIGLAQLHENEDGSKSLLGTSGMESSLNSILAGTDGIITYEKDRLGNIVPGTEQVSQRTMDGKDVYTTISSPLQSFMETQMDAFQEKVKGKYMTATLVSAKTGEILATTQRPTFDADTKEGITEDFVWRDILYQSNYEPGSTMKVMMLAAAIDNNTFPGGEVFNSSELKIADATIRDWDVNEGLTGGRTMTFSQGFAHSSNVGMTLLEQKMGDATWLDYLNRFKFGVPTRFGLTDEYAGQLPADNIVNIAQSSFGQGISVTQTQMIRAFTAIANDGVMLEPKFISAIYDPNDQTARKSQKEIVGNPVSKDAASLTRTNMVLVGTDPVYGTMYNHSTGKPTVTVPGQNVALKSGTAQIADEKNGGYLVGLTDYIFSAVSMSPAENPDFILYVTVQQPEHYSGIQLGEFANPILERASAMKDSLNLQTTAKALEQVSQQSPYPMPSVKDISPGDLAEELRRNLVQPIVVGTGTKIKNSSAEEGKNLAPNQQVLILSDKAEEVPDMYGWTKETAETLAKWLNIELEFQGSGSTVQKQDVRANTAIKDIKKITLTLGD</sequence>
<proteinExistence type="evidence at protein level"/>
<keyword id="KW-0002">3D-structure</keyword>
<keyword id="KW-0046">Antibiotic resistance</keyword>
<keyword id="KW-0131">Cell cycle</keyword>
<keyword id="KW-0132">Cell division</keyword>
<keyword id="KW-1003">Cell membrane</keyword>
<keyword id="KW-0133">Cell shape</keyword>
<keyword id="KW-0961">Cell wall biogenesis/degradation</keyword>
<keyword id="KW-0472">Membrane</keyword>
<keyword id="KW-0573">Peptidoglycan synthesis</keyword>
<keyword id="KW-1185">Reference proteome</keyword>
<keyword id="KW-0677">Repeat</keyword>
<keyword id="KW-0812">Transmembrane</keyword>
<keyword id="KW-1133">Transmembrane helix</keyword>
<name>PBPX_STRPN</name>
<reference key="1">
    <citation type="journal article" date="2001" name="Science">
        <title>Complete genome sequence of a virulent isolate of Streptococcus pneumoniae.</title>
        <authorList>
            <person name="Tettelin H."/>
            <person name="Nelson K.E."/>
            <person name="Paulsen I.T."/>
            <person name="Eisen J.A."/>
            <person name="Read T.D."/>
            <person name="Peterson S.N."/>
            <person name="Heidelberg J.F."/>
            <person name="DeBoy R.T."/>
            <person name="Haft D.H."/>
            <person name="Dodson R.J."/>
            <person name="Durkin A.S."/>
            <person name="Gwinn M.L."/>
            <person name="Kolonay J.F."/>
            <person name="Nelson W.C."/>
            <person name="Peterson J.D."/>
            <person name="Umayam L.A."/>
            <person name="White O."/>
            <person name="Salzberg S.L."/>
            <person name="Lewis M.R."/>
            <person name="Radune D."/>
            <person name="Holtzapple E.K."/>
            <person name="Khouri H.M."/>
            <person name="Wolf A.M."/>
            <person name="Utterback T.R."/>
            <person name="Hansen C.L."/>
            <person name="McDonald L.A."/>
            <person name="Feldblyum T.V."/>
            <person name="Angiuoli S.V."/>
            <person name="Dickinson T."/>
            <person name="Hickey E.K."/>
            <person name="Holt I.E."/>
            <person name="Loftus B.J."/>
            <person name="Yang F."/>
            <person name="Smith H.O."/>
            <person name="Venter J.C."/>
            <person name="Dougherty B.A."/>
            <person name="Morrison D.A."/>
            <person name="Hollingshead S.K."/>
            <person name="Fraser C.M."/>
        </authorList>
    </citation>
    <scope>NUCLEOTIDE SEQUENCE [LARGE SCALE GENOMIC DNA]</scope>
    <source>
        <strain>ATCC BAA-334 / TIGR4</strain>
    </source>
</reference>
<reference key="2">
    <citation type="journal article" date="1996" name="Nat. Struct. Biol.">
        <title>X-ray structure of Streptococcus pneumoniae PBP2x, a primary penicillin target enzyme.</title>
        <authorList>
            <person name="Pares S."/>
            <person name="Mouz N."/>
            <person name="Petillot Y."/>
            <person name="Hakenbeck R."/>
            <person name="Dideberg O."/>
        </authorList>
    </citation>
    <scope>X-RAY CRYSTALLOGRAPHY (3.5 ANGSTROMS) OF 76-750</scope>
</reference>
<accession>P14677</accession>
<feature type="chain" id="PRO_0000195453" description="Penicillin-binding protein 2x">
    <location>
        <begin position="1"/>
        <end position="750"/>
    </location>
</feature>
<feature type="transmembrane region" description="Helical" evidence="3">
    <location>
        <begin position="29"/>
        <end position="49"/>
    </location>
</feature>
<feature type="domain" description="PASTA 1" evidence="4">
    <location>
        <begin position="632"/>
        <end position="691"/>
    </location>
</feature>
<feature type="domain" description="PASTA 2" evidence="4">
    <location>
        <begin position="692"/>
        <end position="750"/>
    </location>
</feature>
<feature type="active site" description="Acyl-ester intermediate" evidence="1">
    <location>
        <position position="337"/>
    </location>
</feature>
<feature type="strand" evidence="7">
    <location>
        <begin position="65"/>
        <end position="72"/>
    </location>
</feature>
<feature type="strand" evidence="6">
    <location>
        <begin position="86"/>
        <end position="91"/>
    </location>
</feature>
<feature type="strand" evidence="7">
    <location>
        <begin position="93"/>
        <end position="99"/>
    </location>
</feature>
<feature type="strand" evidence="8">
    <location>
        <begin position="107"/>
        <end position="109"/>
    </location>
</feature>
<feature type="turn" evidence="9">
    <location>
        <begin position="116"/>
        <end position="118"/>
    </location>
</feature>
<feature type="helix" evidence="9">
    <location>
        <begin position="119"/>
        <end position="130"/>
    </location>
</feature>
<feature type="helix" evidence="9">
    <location>
        <begin position="134"/>
        <end position="141"/>
    </location>
</feature>
<feature type="strand" evidence="9">
    <location>
        <begin position="147"/>
        <end position="150"/>
    </location>
</feature>
<feature type="helix" evidence="9">
    <location>
        <begin position="153"/>
        <end position="155"/>
    </location>
</feature>
<feature type="strand" evidence="9">
    <location>
        <begin position="156"/>
        <end position="158"/>
    </location>
</feature>
<feature type="helix" evidence="9">
    <location>
        <begin position="160"/>
        <end position="170"/>
    </location>
</feature>
<feature type="turn" evidence="9">
    <location>
        <begin position="171"/>
        <end position="174"/>
    </location>
</feature>
<feature type="strand" evidence="7">
    <location>
        <begin position="177"/>
        <end position="183"/>
    </location>
</feature>
<feature type="strand" evidence="6">
    <location>
        <begin position="185"/>
        <end position="187"/>
    </location>
</feature>
<feature type="strand" evidence="6">
    <location>
        <begin position="191"/>
        <end position="194"/>
    </location>
</feature>
<feature type="helix" evidence="6">
    <location>
        <begin position="195"/>
        <end position="198"/>
    </location>
</feature>
<feature type="strand" evidence="6">
    <location>
        <begin position="201"/>
        <end position="205"/>
    </location>
</feature>
<feature type="turn" evidence="9">
    <location>
        <begin position="207"/>
        <end position="209"/>
    </location>
</feature>
<feature type="strand" evidence="6">
    <location>
        <begin position="211"/>
        <end position="215"/>
    </location>
</feature>
<feature type="helix" evidence="6">
    <location>
        <begin position="218"/>
        <end position="222"/>
    </location>
</feature>
<feature type="helix" evidence="6">
    <location>
        <begin position="224"/>
        <end position="228"/>
    </location>
</feature>
<feature type="strand" evidence="7">
    <location>
        <begin position="232"/>
        <end position="239"/>
    </location>
</feature>
<feature type="strand" evidence="7">
    <location>
        <begin position="250"/>
        <end position="253"/>
    </location>
</feature>
<feature type="strand" evidence="6">
    <location>
        <begin position="260"/>
        <end position="264"/>
    </location>
</feature>
<feature type="helix" evidence="6">
    <location>
        <begin position="267"/>
        <end position="284"/>
    </location>
</feature>
<feature type="strand" evidence="6">
    <location>
        <begin position="287"/>
        <end position="295"/>
    </location>
</feature>
<feature type="turn" evidence="6">
    <location>
        <begin position="296"/>
        <end position="298"/>
    </location>
</feature>
<feature type="strand" evidence="6">
    <location>
        <begin position="300"/>
        <end position="308"/>
    </location>
</feature>
<feature type="turn" evidence="6">
    <location>
        <begin position="312"/>
        <end position="314"/>
    </location>
</feature>
<feature type="turn" evidence="6">
    <location>
        <begin position="327"/>
        <end position="329"/>
    </location>
</feature>
<feature type="helix" evidence="6">
    <location>
        <begin position="336"/>
        <end position="339"/>
    </location>
</feature>
<feature type="helix" evidence="6">
    <location>
        <begin position="340"/>
        <end position="349"/>
    </location>
</feature>
<feature type="strand" evidence="6">
    <location>
        <begin position="358"/>
        <end position="360"/>
    </location>
</feature>
<feature type="strand" evidence="6">
    <location>
        <begin position="364"/>
        <end position="366"/>
    </location>
</feature>
<feature type="strand" evidence="6">
    <location>
        <begin position="369"/>
        <end position="371"/>
    </location>
</feature>
<feature type="helix" evidence="6">
    <location>
        <begin position="374"/>
        <end position="377"/>
    </location>
</feature>
<feature type="strand" evidence="8">
    <location>
        <begin position="378"/>
        <end position="380"/>
    </location>
</feature>
<feature type="strand" evidence="6">
    <location>
        <begin position="385"/>
        <end position="387"/>
    </location>
</feature>
<feature type="helix" evidence="6">
    <location>
        <begin position="388"/>
        <end position="393"/>
    </location>
</feature>
<feature type="helix" evidence="6">
    <location>
        <begin position="397"/>
        <end position="407"/>
    </location>
</feature>
<feature type="helix" evidence="6">
    <location>
        <begin position="409"/>
        <end position="418"/>
    </location>
</feature>
<feature type="turn" evidence="6">
    <location>
        <begin position="419"/>
        <end position="422"/>
    </location>
</feature>
<feature type="strand" evidence="6">
    <location>
        <begin position="428"/>
        <end position="431"/>
    </location>
</feature>
<feature type="helix" evidence="6">
    <location>
        <begin position="442"/>
        <end position="447"/>
    </location>
</feature>
<feature type="helix" evidence="6">
    <location>
        <begin position="448"/>
        <end position="450"/>
    </location>
</feature>
<feature type="helix" evidence="6">
    <location>
        <begin position="458"/>
        <end position="469"/>
    </location>
</feature>
<feature type="turn" evidence="6">
    <location>
        <begin position="470"/>
        <end position="472"/>
    </location>
</feature>
<feature type="strand" evidence="6">
    <location>
        <begin position="480"/>
        <end position="485"/>
    </location>
</feature>
<feature type="turn" evidence="6">
    <location>
        <begin position="486"/>
        <end position="489"/>
    </location>
</feature>
<feature type="strand" evidence="6">
    <location>
        <begin position="490"/>
        <end position="493"/>
    </location>
</feature>
<feature type="strand" evidence="6">
    <location>
        <begin position="498"/>
        <end position="500"/>
    </location>
</feature>
<feature type="helix" evidence="6">
    <location>
        <begin position="505"/>
        <end position="520"/>
    </location>
</feature>
<feature type="turn" evidence="6">
    <location>
        <begin position="522"/>
        <end position="524"/>
    </location>
</feature>
<feature type="turn" evidence="6">
    <location>
        <begin position="530"/>
        <end position="532"/>
    </location>
</feature>
<feature type="strand" evidence="6">
    <location>
        <begin position="533"/>
        <end position="537"/>
    </location>
</feature>
<feature type="strand" evidence="6">
    <location>
        <begin position="545"/>
        <end position="552"/>
    </location>
</feature>
<feature type="helix" evidence="6">
    <location>
        <begin position="556"/>
        <end position="558"/>
    </location>
</feature>
<feature type="strand" evidence="6">
    <location>
        <begin position="559"/>
        <end position="561"/>
    </location>
</feature>
<feature type="strand" evidence="6">
    <location>
        <begin position="568"/>
        <end position="580"/>
    </location>
</feature>
<feature type="strand" evidence="6">
    <location>
        <begin position="582"/>
        <end position="591"/>
    </location>
</feature>
<feature type="helix" evidence="6">
    <location>
        <begin position="597"/>
        <end position="617"/>
    </location>
</feature>
<feature type="helix" evidence="7">
    <location>
        <begin position="625"/>
        <end position="628"/>
    </location>
</feature>
<feature type="helix" evidence="6">
    <location>
        <begin position="646"/>
        <end position="654"/>
    </location>
</feature>
<feature type="turn" evidence="6">
    <location>
        <begin position="655"/>
        <end position="657"/>
    </location>
</feature>
<feature type="strand" evidence="6">
    <location>
        <begin position="659"/>
        <end position="665"/>
    </location>
</feature>
<feature type="strand" evidence="6">
    <location>
        <begin position="667"/>
        <end position="674"/>
    </location>
</feature>
<feature type="strand" evidence="6">
    <location>
        <begin position="685"/>
        <end position="691"/>
    </location>
</feature>
<feature type="helix" evidence="6">
    <location>
        <begin position="704"/>
        <end position="714"/>
    </location>
</feature>
<feature type="strand" evidence="6">
    <location>
        <begin position="717"/>
        <end position="732"/>
    </location>
</feature>
<feature type="turn" evidence="9">
    <location>
        <begin position="738"/>
        <end position="740"/>
    </location>
</feature>
<feature type="strand" evidence="6">
    <location>
        <begin position="743"/>
        <end position="749"/>
    </location>
</feature>
<protein>
    <recommendedName>
        <fullName>Penicillin-binding protein 2x</fullName>
        <shortName>PBP-2x</shortName>
        <shortName>PBP2x</shortName>
    </recommendedName>
</protein>
<evidence type="ECO:0000250" key="1">
    <source>
        <dbReference type="UniProtKB" id="P0AD65"/>
    </source>
</evidence>
<evidence type="ECO:0000250" key="2">
    <source>
        <dbReference type="UniProtKB" id="P59676"/>
    </source>
</evidence>
<evidence type="ECO:0000255" key="3"/>
<evidence type="ECO:0000255" key="4">
    <source>
        <dbReference type="PROSITE-ProRule" id="PRU00528"/>
    </source>
</evidence>
<evidence type="ECO:0000305" key="5"/>
<evidence type="ECO:0007829" key="6">
    <source>
        <dbReference type="PDB" id="1QME"/>
    </source>
</evidence>
<evidence type="ECO:0007829" key="7">
    <source>
        <dbReference type="PDB" id="1RP5"/>
    </source>
</evidence>
<evidence type="ECO:0007829" key="8">
    <source>
        <dbReference type="PDB" id="2Z2L"/>
    </source>
</evidence>
<evidence type="ECO:0007829" key="9">
    <source>
        <dbReference type="PDB" id="2ZC3"/>
    </source>
</evidence>
<gene>
    <name type="primary">pbpX</name>
    <name type="ordered locus">SP_0336</name>
</gene>